<dbReference type="EC" id="5.5.1.19" evidence="3"/>
<dbReference type="EC" id="2.5.1.32" evidence="3"/>
<dbReference type="EMBL" id="AJ133646">
    <property type="protein sequence ID" value="CAB51949.1"/>
    <property type="molecule type" value="Genomic_DNA"/>
</dbReference>
<dbReference type="EMBL" id="AY174117">
    <property type="protein sequence ID" value="AAO73816.1"/>
    <property type="molecule type" value="mRNA"/>
</dbReference>
<dbReference type="EMBL" id="AY177204">
    <property type="protein sequence ID" value="AAO47570.1"/>
    <property type="molecule type" value="mRNA"/>
</dbReference>
<dbReference type="EMBL" id="DQ016503">
    <property type="protein sequence ID" value="AAY33923.1"/>
    <property type="molecule type" value="Genomic_DNA"/>
</dbReference>
<dbReference type="BioCyc" id="MetaCyc:MONOMER-17247"/>
<dbReference type="BRENDA" id="2.5.1.32">
    <property type="organism ID" value="4710"/>
</dbReference>
<dbReference type="BRENDA" id="5.5.1.19">
    <property type="organism ID" value="4710"/>
</dbReference>
<dbReference type="UniPathway" id="UPA00799">
    <property type="reaction ID" value="UER00773"/>
</dbReference>
<dbReference type="UniPathway" id="UPA00802"/>
<dbReference type="GO" id="GO:0016020">
    <property type="term" value="C:membrane"/>
    <property type="evidence" value="ECO:0007669"/>
    <property type="project" value="UniProtKB-SubCell"/>
</dbReference>
<dbReference type="GO" id="GO:0046905">
    <property type="term" value="F:15-cis-phytoene synthase activity"/>
    <property type="evidence" value="ECO:0000314"/>
    <property type="project" value="UniProtKB"/>
</dbReference>
<dbReference type="GO" id="GO:0016872">
    <property type="term" value="F:intramolecular lyase activity"/>
    <property type="evidence" value="ECO:0007669"/>
    <property type="project" value="InterPro"/>
</dbReference>
<dbReference type="GO" id="GO:0045436">
    <property type="term" value="F:lycopene beta cyclase activity"/>
    <property type="evidence" value="ECO:0000314"/>
    <property type="project" value="UniProtKB"/>
</dbReference>
<dbReference type="GO" id="GO:0051996">
    <property type="term" value="F:squalene synthase [NAD(P)H] activity"/>
    <property type="evidence" value="ECO:0007669"/>
    <property type="project" value="InterPro"/>
</dbReference>
<dbReference type="GO" id="GO:0016120">
    <property type="term" value="P:carotene biosynthetic process"/>
    <property type="evidence" value="ECO:0000314"/>
    <property type="project" value="UniProtKB"/>
</dbReference>
<dbReference type="GO" id="GO:0016117">
    <property type="term" value="P:carotenoid biosynthetic process"/>
    <property type="evidence" value="ECO:0007669"/>
    <property type="project" value="UniProtKB-KW"/>
</dbReference>
<dbReference type="CDD" id="cd00683">
    <property type="entry name" value="Trans_IPPS_HH"/>
    <property type="match status" value="1"/>
</dbReference>
<dbReference type="Gene3D" id="1.10.600.10">
    <property type="entry name" value="Farnesyl Diphosphate Synthase"/>
    <property type="match status" value="1"/>
</dbReference>
<dbReference type="InterPro" id="IPR008949">
    <property type="entry name" value="Isoprenoid_synthase_dom_sf"/>
</dbReference>
<dbReference type="InterPro" id="IPR017825">
    <property type="entry name" value="Lycopene_cyclase_dom"/>
</dbReference>
<dbReference type="InterPro" id="IPR002060">
    <property type="entry name" value="Squ/phyt_synthse"/>
</dbReference>
<dbReference type="InterPro" id="IPR019845">
    <property type="entry name" value="Squalene/phytoene_synthase_CS"/>
</dbReference>
<dbReference type="InterPro" id="IPR033904">
    <property type="entry name" value="Trans_IPPS_HH"/>
</dbReference>
<dbReference type="NCBIfam" id="TIGR03462">
    <property type="entry name" value="CarR_dom_SF"/>
    <property type="match status" value="2"/>
</dbReference>
<dbReference type="PANTHER" id="PTHR31480">
    <property type="entry name" value="BIFUNCTIONAL LYCOPENE CYCLASE/PHYTOENE SYNTHASE"/>
    <property type="match status" value="1"/>
</dbReference>
<dbReference type="Pfam" id="PF00494">
    <property type="entry name" value="SQS_PSY"/>
    <property type="match status" value="1"/>
</dbReference>
<dbReference type="SFLD" id="SFLDS00005">
    <property type="entry name" value="Isoprenoid_Synthase_Type_I"/>
    <property type="match status" value="1"/>
</dbReference>
<dbReference type="SFLD" id="SFLDG01018">
    <property type="entry name" value="Squalene/Phytoene_Synthase_Lik"/>
    <property type="match status" value="1"/>
</dbReference>
<dbReference type="SUPFAM" id="SSF48576">
    <property type="entry name" value="Terpenoid synthases"/>
    <property type="match status" value="1"/>
</dbReference>
<dbReference type="PROSITE" id="PS01045">
    <property type="entry name" value="SQUALEN_PHYTOEN_SYN_2"/>
    <property type="match status" value="1"/>
</dbReference>
<protein>
    <recommendedName>
        <fullName evidence="7">Bifunctional lycopene cyclase/phytoene synthase</fullName>
    </recommendedName>
    <domain>
        <recommendedName>
            <fullName evidence="7">Lycopene beta-cyclase</fullName>
            <ecNumber evidence="3">5.5.1.19</ecNumber>
        </recommendedName>
        <alternativeName>
            <fullName evidence="7">Lycopene cyclase</fullName>
        </alternativeName>
    </domain>
    <domain>
        <recommendedName>
            <fullName evidence="7">Phytoene synthase</fullName>
            <ecNumber evidence="3">2.5.1.32</ecNumber>
        </recommendedName>
    </domain>
</protein>
<evidence type="ECO:0000255" key="1"/>
<evidence type="ECO:0000256" key="2">
    <source>
        <dbReference type="SAM" id="MobiDB-lite"/>
    </source>
</evidence>
<evidence type="ECO:0000269" key="3">
    <source>
    </source>
</evidence>
<evidence type="ECO:0000269" key="4">
    <source>
    </source>
</evidence>
<evidence type="ECO:0000269" key="5">
    <source>
    </source>
</evidence>
<evidence type="ECO:0000269" key="6">
    <source>
    </source>
</evidence>
<evidence type="ECO:0000303" key="7">
    <source>
    </source>
</evidence>
<evidence type="ECO:0000303" key="8">
    <source>
    </source>
</evidence>
<evidence type="ECO:0000305" key="9"/>
<evidence type="ECO:0000305" key="10">
    <source>
    </source>
</evidence>
<organism>
    <name type="scientific">Phaffia rhodozyma</name>
    <name type="common">Yeast</name>
    <name type="synonym">Xanthophyllomyces dendrorhous</name>
    <dbReference type="NCBI Taxonomy" id="264483"/>
    <lineage>
        <taxon>Eukaryota</taxon>
        <taxon>Fungi</taxon>
        <taxon>Dikarya</taxon>
        <taxon>Basidiomycota</taxon>
        <taxon>Agaricomycotina</taxon>
        <taxon>Tremellomycetes</taxon>
        <taxon>Cystofilobasidiales</taxon>
        <taxon>Mrakiaceae</taxon>
        <taxon>Phaffia</taxon>
    </lineage>
</organism>
<proteinExistence type="evidence at protein level"/>
<comment type="function">
    <text evidence="3 4">Bifunctional enzyme that catalyzes the reactions from geranylgeranyl diphosphate to phytoene (phytoene synthase) and lycopene to beta-carotene via the intermediate gamma-carotene (lycopene cyclase). The cyclase preferentially catalyzes the symmetric cyclization of both ends of the substrate to produce dicyclic carotenoids. Beta-carotene is further processed to the acidic carotenoid astaxanthin.</text>
</comment>
<comment type="catalytic activity">
    <reaction evidence="3">
        <text>all-trans-lycopene = gamma-carotene</text>
        <dbReference type="Rhea" id="RHEA:32219"/>
        <dbReference type="ChEBI" id="CHEBI:15948"/>
        <dbReference type="ChEBI" id="CHEBI:27740"/>
        <dbReference type="EC" id="5.5.1.19"/>
    </reaction>
</comment>
<comment type="catalytic activity">
    <reaction evidence="3">
        <text>gamma-carotene = all-trans-beta-carotene</text>
        <dbReference type="Rhea" id="RHEA:32239"/>
        <dbReference type="ChEBI" id="CHEBI:17579"/>
        <dbReference type="ChEBI" id="CHEBI:27740"/>
        <dbReference type="EC" id="5.5.1.19"/>
    </reaction>
</comment>
<comment type="catalytic activity">
    <reaction evidence="3">
        <text>2 (2E,6E,10E)-geranylgeranyl diphosphate = 15-cis-phytoene + 2 diphosphate</text>
        <dbReference type="Rhea" id="RHEA:34475"/>
        <dbReference type="ChEBI" id="CHEBI:27787"/>
        <dbReference type="ChEBI" id="CHEBI:33019"/>
        <dbReference type="ChEBI" id="CHEBI:58756"/>
        <dbReference type="EC" id="2.5.1.32"/>
    </reaction>
</comment>
<comment type="pathway">
    <text evidence="3">Carotenoid biosynthesis; beta-carotene biosynthesis.</text>
</comment>
<comment type="pathway">
    <text evidence="3">Carotenoid biosynthesis; phytoene biosynthesis; all-trans-phytoene from geranylgeranyl diphosphate: step 1/1.</text>
</comment>
<comment type="subcellular location">
    <subcellularLocation>
        <location evidence="9">Membrane</location>
        <topology evidence="9">Multi-pass membrane protein</topology>
    </subcellularLocation>
</comment>
<comment type="alternative products">
    <event type="alternative splicing"/>
    <isoform>
        <id>Q7Z859-1</id>
        <name>1</name>
        <sequence type="displayed"/>
    </isoform>
    <isoform>
        <id>Q7Z859-2</id>
        <name>2</name>
        <sequence type="described" ref="VSP_041283"/>
    </isoform>
</comment>
<comment type="induction">
    <text evidence="5 6">Down-regulated in stationary phase.</text>
</comment>
<comment type="similarity">
    <text evidence="9">In the N-terminal section; belongs to the lycopene beta-cyclase family.</text>
</comment>
<comment type="similarity">
    <text evidence="9">In the C-terminal section; belongs to the phytoene/squalene synthase family.</text>
</comment>
<accession>Q7Z859</accession>
<accession>Q7Z856</accession>
<accession>Q9UUQ0</accession>
<gene>
    <name evidence="7" type="primary">crtYB</name>
    <name type="synonym">pbs</name>
</gene>
<sequence>MTALAYYQIHLIYTLPILGLLGLLTSPILTKFDIYKISILVFIAFSATTPWDSWIIRNGAWTYPSAESGQGVFGTFLDVPYEEYAFFVIQTVITGLVYVLATRHLLPSLALPKTRSSALSLALKALIPLPIIYLFTAHPSPSPDPLVTDHYFYMRALSLLITPPTMLLAALSGEYAFDWKSGRAKSTIAAIMIPTVYLIWVDYVAVGQDSWSINDEKIVGWRLGGVLPIEEAMFFLLTNLMIVLGLSACDHTQALYLLHGRTIYGNKKMPSSFPLITPPVLSLFFSSRPYSSQPKRDLELAVKLLEEKSRSFFVASAGFPSEVRERLVGLYAFCRVTDDLIDSPEVSSNPHATIDMVSDFLTLLFGPPLHPSQPDKILSSPLLPPSHPSRPTGMYPLPPPPSLSPAELVQFLTERVPVQYHFAFRLLAKLQGLIPRYPLDELLRGYTTDLIFPLSTEAVQARKTPIETTADLLDYGLCVAGSVAELLVYVSWASAPSQVPATIEEREAVLVASREMGTALQLVNIARDIKGDATEGRFYLPLSFFGLRDESKLAIPTDWTEPRPQDFDKLLSLSPSSTLPSSNASESFRFEWKTYSLPLVAYAEDLAKHSYKGIDRLPTEVQAGMRAACASYLLIGREIKVVWKGDVGERRTVAGWRRVRKVLSVVMSGWEGQ</sequence>
<reference key="1">
    <citation type="journal article" date="1999" name="Mol. Gen. Genet.">
        <title>Isolation and functional characterisation of a novel type of carotenoid biosynthetic gene from Xanthophyllomyces dendrorhous.</title>
        <authorList>
            <person name="Verdoes J.C."/>
            <person name="Krubasik K.P."/>
            <person name="Sandmann G."/>
            <person name="van Ooyen A.J."/>
        </authorList>
    </citation>
    <scope>NUCLEOTIDE SEQUENCE [GENOMIC DNA]</scope>
    <scope>FUNCTION</scope>
    <scope>CATALYTIC ACTIVITY</scope>
    <source>
        <strain>CBS 6938 / CCRC 22365 / VKM Y-2793</strain>
    </source>
</reference>
<reference key="2">
    <citation type="journal article" date="2003" name="Appl. Environ. Microbiol.">
        <title>Alternative splicing of transcripts from crtI and crtYB genes of Xanthophyllomyces dendrorhous.</title>
        <authorList>
            <person name="Lodato P."/>
            <person name="Alcaino J."/>
            <person name="Barahona S."/>
            <person name="Retamales P."/>
            <person name="Cifuentes V."/>
        </authorList>
    </citation>
    <scope>NUCLEOTIDE SEQUENCE [MRNA] (ISOFORMS 1 AND 2)</scope>
    <source>
        <strain>ATCC 24230 / UCD 67-385</strain>
    </source>
</reference>
<reference key="3">
    <citation type="journal article" date="2008" name="Biol. Res.">
        <title>Genomic organization of the structural genes controlling the astaxanthin biosynthesis pathway of Xanthophyllomyces dendrorhous.</title>
        <authorList>
            <person name="Niklitschek M."/>
            <person name="Alcaino J."/>
            <person name="Barahona S."/>
            <person name="Sepulveda D."/>
            <person name="Lozano C."/>
            <person name="Carmona M."/>
            <person name="Marcoleta A."/>
            <person name="Martinez C."/>
            <person name="Lodato P."/>
            <person name="Baeza M."/>
            <person name="Cifuentes V."/>
        </authorList>
    </citation>
    <scope>NUCLEOTIDE SEQUENCE [GENOMIC DNA]</scope>
    <scope>INDUCTION</scope>
    <source>
        <strain>ATCC 24230 / UCD 67-385</strain>
    </source>
</reference>
<reference key="4">
    <citation type="journal article" date="2006" name="Biochim. Biophys. Acta">
        <title>The biotechnological potential of the al-2 gene from Neurospora crassa for the production of monocyclic keto hydroxy carotenoids.</title>
        <authorList>
            <person name="Sandmann G."/>
            <person name="Zhu C."/>
            <person name="Krubasik P."/>
            <person name="Fraser P.D."/>
        </authorList>
    </citation>
    <scope>FUNCTION</scope>
</reference>
<reference key="5">
    <citation type="journal article" date="2007" name="Biol. Res.">
        <title>Expression of the carotenoid biosynthesis genes in Xanthophyllomyces dendrorhous.</title>
        <authorList>
            <person name="Lodato P."/>
            <person name="Alcaino J."/>
            <person name="Barahona S."/>
            <person name="Niklitschek M."/>
            <person name="Carmona M."/>
            <person name="Wozniak A."/>
            <person name="Baeza M."/>
            <person name="Jimenez A."/>
            <person name="Cifuentes V."/>
        </authorList>
    </citation>
    <scope>INDUCTION</scope>
    <source>
        <strain>ATCC 24230 / UCD 67-385</strain>
    </source>
</reference>
<name>LCPS_PHARH</name>
<feature type="chain" id="PRO_0000409239" description="Bifunctional lycopene cyclase/phytoene synthase">
    <location>
        <begin position="1"/>
        <end position="673"/>
    </location>
</feature>
<feature type="transmembrane region" description="Helical" evidence="1">
    <location>
        <begin position="9"/>
        <end position="29"/>
    </location>
</feature>
<feature type="transmembrane region" description="Helical" evidence="1">
    <location>
        <begin position="36"/>
        <end position="56"/>
    </location>
</feature>
<feature type="transmembrane region" description="Helical" evidence="1">
    <location>
        <begin position="81"/>
        <end position="101"/>
    </location>
</feature>
<feature type="transmembrane region" description="Helical" evidence="1">
    <location>
        <begin position="117"/>
        <end position="137"/>
    </location>
</feature>
<feature type="transmembrane region" description="Helical" evidence="1">
    <location>
        <begin position="157"/>
        <end position="177"/>
    </location>
</feature>
<feature type="transmembrane region" description="Helical" evidence="1">
    <location>
        <begin position="187"/>
        <end position="207"/>
    </location>
</feature>
<feature type="transmembrane region" description="Helical" evidence="1">
    <location>
        <begin position="226"/>
        <end position="246"/>
    </location>
</feature>
<feature type="region of interest" description="Lycopene beta-cyclase" evidence="10">
    <location>
        <begin position="1"/>
        <end position="251"/>
    </location>
</feature>
<feature type="region of interest" description="Phytoene synthase" evidence="10">
    <location>
        <begin position="258"/>
        <end position="673"/>
    </location>
</feature>
<feature type="region of interest" description="Disordered" evidence="2">
    <location>
        <begin position="376"/>
        <end position="399"/>
    </location>
</feature>
<feature type="splice variant" id="VSP_041283" description="In isoform 2." evidence="8">
    <original>MTALAYYQIHLIYTLPILGLLGLLTSPILTKFDIYKISILVFIAFS</original>
    <variation>MSPYLFFVLHTTHVCICV</variation>
    <location>
        <begin position="1"/>
        <end position="46"/>
    </location>
</feature>
<feature type="sequence variant" description="In strain: CBS 6938 / CCRC 22365 / VKM Y-2793.">
    <original>E</original>
    <variation>K</variation>
    <location>
        <position position="307"/>
    </location>
</feature>
<keyword id="KW-0025">Alternative splicing</keyword>
<keyword id="KW-0125">Carotenoid biosynthesis</keyword>
<keyword id="KW-0413">Isomerase</keyword>
<keyword id="KW-0472">Membrane</keyword>
<keyword id="KW-0511">Multifunctional enzyme</keyword>
<keyword id="KW-0808">Transferase</keyword>
<keyword id="KW-0812">Transmembrane</keyword>
<keyword id="KW-1133">Transmembrane helix</keyword>